<sequence>MDLADLVKDVKRELSFSELKGKRVSIDGYNALYQFLAAIRQPDGTPLMDSQGRVTSHLSGLFYRTINILEEGVIPIYVFDGKPPEQKSEELERRRKAKEEAERKLERAKSEGKIEELRKYSQAILRLSNIMVEESKKLLRAMGIPIVQAPSEGEAEAAYLNKLGLSWAAASQDYDAILFGAKRLVRNLTITGKRKLPNKDVYVEIKPELIETEILLKKLGITREQLIDIGILIGTDYNPDGIRGIGPERALKIIKKYGKIEKAMEYGEISKKDINFNIDEIRGLFLNPQVVKPEEALDLNEPNGEDIINILVYEHNFSEERVKNGIERLTKAIKEAKGASRQTGLDRWF</sequence>
<keyword id="KW-0002">3D-structure</keyword>
<keyword id="KW-0227">DNA damage</keyword>
<keyword id="KW-0234">DNA repair</keyword>
<keyword id="KW-0235">DNA replication</keyword>
<keyword id="KW-0255">Endonuclease</keyword>
<keyword id="KW-0269">Exonuclease</keyword>
<keyword id="KW-0378">Hydrolase</keyword>
<keyword id="KW-0460">Magnesium</keyword>
<keyword id="KW-0479">Metal-binding</keyword>
<keyword id="KW-0540">Nuclease</keyword>
<keyword id="KW-1185">Reference proteome</keyword>
<evidence type="ECO:0000250" key="1"/>
<evidence type="ECO:0000255" key="2">
    <source>
        <dbReference type="HAMAP-Rule" id="MF_00614"/>
    </source>
</evidence>
<evidence type="ECO:0000269" key="3">
    <source>
    </source>
</evidence>
<evidence type="ECO:0000269" key="4">
    <source>
    </source>
</evidence>
<evidence type="ECO:0000305" key="5"/>
<evidence type="ECO:0007829" key="6">
    <source>
        <dbReference type="PDB" id="2IZO"/>
    </source>
</evidence>
<comment type="function">
    <text evidence="1 3">Structure-specific nuclease with 5'-flap endonuclease and 5'-3' exonuclease activities involved in DNA replication and repair. During DNA replication, cleaves the 5'-overhanging flap structure that is generated by displacement synthesis when DNA polymerase encounters the 5'-end of a downstream Okazaki fragment. Binds the unpaired 3'-DNA end and kinks the DNA to facilitate 5' cleavage specificity. Cleaves one nucleotide into the double-stranded DNA from the junction in flap DNA, leaving a nick for ligation. Also involved in the base excision repair (BER) pathway. Acts as a genome stabilization factor that prevents flaps from equilibrating into structures that lead to duplications and deletions. Also possesses 5'-3' exonuclease activity on nicked or gapped double-stranded DNA (By similarity). DNA polymerase I, DNA ligase and the flap endonuclease may be constitutively associated with the PCNA heterotrimer forming a scanning complex able to couple DNA synthesis and Okazaki fragment maturation.</text>
</comment>
<comment type="cofactor">
    <cofactor evidence="2">
        <name>Mg(2+)</name>
        <dbReference type="ChEBI" id="CHEBI:18420"/>
    </cofactor>
    <text evidence="2">Binds 2 magnesium ions per subunit. They probably participate in the reaction catalyzed by the enzyme. May bind an additional third magnesium ion after substrate binding.</text>
</comment>
<comment type="activity regulation">
    <text evidence="3">Heterotrimeric PCNA stimulates the nuclease activity without altering cleavage specificity.</text>
</comment>
<comment type="subunit">
    <text evidence="3 4">Interacts with PCNA via subunit PCNA1.</text>
</comment>
<comment type="similarity">
    <text evidence="2">Belongs to the XPG/RAD2 endonuclease family. FEN1 subfamily.</text>
</comment>
<comment type="sequence caution" evidence="5">
    <conflict type="erroneous initiation">
        <sequence resource="EMBL-CDS" id="AAK40525"/>
    </conflict>
    <text>Truncated N-terminus.</text>
</comment>
<organism>
    <name type="scientific">Saccharolobus solfataricus (strain ATCC 35092 / DSM 1617 / JCM 11322 / P2)</name>
    <name type="common">Sulfolobus solfataricus</name>
    <dbReference type="NCBI Taxonomy" id="273057"/>
    <lineage>
        <taxon>Archaea</taxon>
        <taxon>Thermoproteota</taxon>
        <taxon>Thermoprotei</taxon>
        <taxon>Sulfolobales</taxon>
        <taxon>Sulfolobaceae</taxon>
        <taxon>Saccharolobus</taxon>
    </lineage>
</organism>
<reference key="1">
    <citation type="journal article" date="2001" name="Proc. Natl. Acad. Sci. U.S.A.">
        <title>The complete genome of the crenarchaeon Sulfolobus solfataricus P2.</title>
        <authorList>
            <person name="She Q."/>
            <person name="Singh R.K."/>
            <person name="Confalonieri F."/>
            <person name="Zivanovic Y."/>
            <person name="Allard G."/>
            <person name="Awayez M.J."/>
            <person name="Chan-Weiher C.C.-Y."/>
            <person name="Clausen I.G."/>
            <person name="Curtis B.A."/>
            <person name="De Moors A."/>
            <person name="Erauso G."/>
            <person name="Fletcher C."/>
            <person name="Gordon P.M.K."/>
            <person name="Heikamp-de Jong I."/>
            <person name="Jeffries A.C."/>
            <person name="Kozera C.J."/>
            <person name="Medina N."/>
            <person name="Peng X."/>
            <person name="Thi-Ngoc H.P."/>
            <person name="Redder P."/>
            <person name="Schenk M.E."/>
            <person name="Theriault C."/>
            <person name="Tolstrup N."/>
            <person name="Charlebois R.L."/>
            <person name="Doolittle W.F."/>
            <person name="Duguet M."/>
            <person name="Gaasterland T."/>
            <person name="Garrett R.A."/>
            <person name="Ragan M.A."/>
            <person name="Sensen C.W."/>
            <person name="Van der Oost J."/>
        </authorList>
    </citation>
    <scope>NUCLEOTIDE SEQUENCE [LARGE SCALE GENOMIC DNA]</scope>
    <source>
        <strain>ATCC 35092 / DSM 1617 / JCM 11322 / P2</strain>
    </source>
</reference>
<reference key="2">
    <citation type="journal article" date="2003" name="Mol. Cell">
        <title>A heterotrimeric PCNA in the hyperthermophilic archaeon Sulfolobus solfataricus.</title>
        <authorList>
            <person name="Dionne I."/>
            <person name="Nookala R.K."/>
            <person name="Jackson S.P."/>
            <person name="Doherty A.J."/>
            <person name="Bell S.D."/>
        </authorList>
    </citation>
    <scope>FUNCTION</scope>
    <scope>ACTIVITY REGULATION</scope>
    <scope>INTERACTION WITH PCNA1</scope>
    <scope>SUBUNIT</scope>
    <scope>MUTAGENESIS OF 341-ARG--PHE-349</scope>
</reference>
<reference key="3">
    <citation type="journal article" date="2006" name="Nucleic Acids Res.">
        <title>Structure of an archaeal PCNA1-PCNA2-FEN1 complex: elucidating PCNA subunit and client enzyme specificity.</title>
        <authorList>
            <person name="Dore A.S."/>
            <person name="Kilkenny M.L."/>
            <person name="Jones S.A."/>
            <person name="Oliver A.W."/>
            <person name="Roe S.M."/>
            <person name="Bell S.D."/>
            <person name="Pearl L.H."/>
        </authorList>
    </citation>
    <scope>X-RAY CRYSTALLOGRAPHY (2.9 ANGSTROMS) OF 5-349 IN COMPLEX WITH PCNA</scope>
</reference>
<accession>Q980U8</accession>
<feature type="chain" id="PRO_0000154065" description="Flap endonuclease 1">
    <location>
        <begin position="1"/>
        <end position="349"/>
    </location>
</feature>
<feature type="region of interest" description="N-domain">
    <location>
        <begin position="1"/>
        <end position="98"/>
    </location>
</feature>
<feature type="region of interest" description="I-domain">
    <location>
        <begin position="116"/>
        <end position="258"/>
    </location>
</feature>
<feature type="region of interest" description="Interaction with PCNA">
    <location>
        <begin position="341"/>
        <end position="349"/>
    </location>
</feature>
<feature type="binding site" evidence="2">
    <location>
        <position position="27"/>
    </location>
    <ligand>
        <name>Mg(2+)</name>
        <dbReference type="ChEBI" id="CHEBI:18420"/>
        <label>1</label>
    </ligand>
</feature>
<feature type="binding site" evidence="2">
    <location>
        <position position="80"/>
    </location>
    <ligand>
        <name>Mg(2+)</name>
        <dbReference type="ChEBI" id="CHEBI:18420"/>
        <label>1</label>
    </ligand>
</feature>
<feature type="binding site" evidence="2">
    <location>
        <position position="152"/>
    </location>
    <ligand>
        <name>Mg(2+)</name>
        <dbReference type="ChEBI" id="CHEBI:18420"/>
        <label>1</label>
    </ligand>
</feature>
<feature type="binding site" evidence="2">
    <location>
        <position position="154"/>
    </location>
    <ligand>
        <name>Mg(2+)</name>
        <dbReference type="ChEBI" id="CHEBI:18420"/>
        <label>1</label>
    </ligand>
</feature>
<feature type="binding site" evidence="2">
    <location>
        <position position="173"/>
    </location>
    <ligand>
        <name>Mg(2+)</name>
        <dbReference type="ChEBI" id="CHEBI:18420"/>
        <label>2</label>
    </ligand>
</feature>
<feature type="binding site" evidence="2">
    <location>
        <position position="175"/>
    </location>
    <ligand>
        <name>Mg(2+)</name>
        <dbReference type="ChEBI" id="CHEBI:18420"/>
        <label>2</label>
    </ligand>
</feature>
<feature type="binding site" evidence="2">
    <location>
        <position position="236"/>
    </location>
    <ligand>
        <name>Mg(2+)</name>
        <dbReference type="ChEBI" id="CHEBI:18420"/>
        <label>2</label>
    </ligand>
</feature>
<feature type="mutagenesis site" description="No interaction with PCNA1." evidence="3">
    <location>
        <begin position="341"/>
        <end position="349"/>
    </location>
</feature>
<feature type="helix" evidence="6">
    <location>
        <begin position="16"/>
        <end position="19"/>
    </location>
</feature>
<feature type="strand" evidence="6">
    <location>
        <begin position="22"/>
        <end position="27"/>
    </location>
</feature>
<feature type="helix" evidence="6">
    <location>
        <begin position="28"/>
        <end position="37"/>
    </location>
</feature>
<feature type="strand" evidence="6">
    <location>
        <begin position="50"/>
        <end position="52"/>
    </location>
</feature>
<feature type="helix" evidence="6">
    <location>
        <begin position="56"/>
        <end position="70"/>
    </location>
</feature>
<feature type="strand" evidence="6">
    <location>
        <begin position="73"/>
        <end position="79"/>
    </location>
</feature>
<feature type="helix" evidence="6">
    <location>
        <begin position="129"/>
        <end position="142"/>
    </location>
</feature>
<feature type="strand" evidence="6">
    <location>
        <begin position="146"/>
        <end position="148"/>
    </location>
</feature>
<feature type="helix" evidence="6">
    <location>
        <begin position="153"/>
        <end position="162"/>
    </location>
</feature>
<feature type="strand" evidence="6">
    <location>
        <begin position="165"/>
        <end position="170"/>
    </location>
</feature>
<feature type="strand" evidence="6">
    <location>
        <begin position="172"/>
        <end position="174"/>
    </location>
</feature>
<feature type="helix" evidence="6">
    <location>
        <begin position="175"/>
        <end position="178"/>
    </location>
</feature>
<feature type="strand" evidence="6">
    <location>
        <begin position="182"/>
        <end position="188"/>
    </location>
</feature>
<feature type="strand" evidence="6">
    <location>
        <begin position="208"/>
        <end position="211"/>
    </location>
</feature>
<feature type="helix" evidence="6">
    <location>
        <begin position="212"/>
        <end position="219"/>
    </location>
</feature>
<feature type="helix" evidence="6">
    <location>
        <begin position="223"/>
        <end position="233"/>
    </location>
</feature>
<feature type="strand" evidence="6">
    <location>
        <begin position="236"/>
        <end position="238"/>
    </location>
</feature>
<feature type="helix" evidence="6">
    <location>
        <begin position="247"/>
        <end position="256"/>
    </location>
</feature>
<feature type="helix" evidence="6">
    <location>
        <begin position="281"/>
        <end position="286"/>
    </location>
</feature>
<feature type="helix" evidence="6">
    <location>
        <begin position="304"/>
        <end position="310"/>
    </location>
</feature>
<feature type="turn" evidence="6">
    <location>
        <begin position="311"/>
        <end position="315"/>
    </location>
</feature>
<feature type="helix" evidence="6">
    <location>
        <begin position="319"/>
        <end position="340"/>
    </location>
</feature>
<feature type="helix" evidence="6">
    <location>
        <begin position="345"/>
        <end position="347"/>
    </location>
</feature>
<name>FEN_SACS2</name>
<proteinExistence type="evidence at protein level"/>
<protein>
    <recommendedName>
        <fullName evidence="2">Flap endonuclease 1</fullName>
        <shortName evidence="2">FEN-1</shortName>
        <ecNumber evidence="2">3.1.-.-</ecNumber>
    </recommendedName>
    <alternativeName>
        <fullName evidence="2">Flap structure-specific endonuclease 1</fullName>
    </alternativeName>
</protein>
<gene>
    <name evidence="2" type="primary">fen</name>
    <name type="ordered locus">SSO0179</name>
</gene>
<dbReference type="EC" id="3.1.-.-" evidence="2"/>
<dbReference type="EMBL" id="AE006641">
    <property type="protein sequence ID" value="AAK40525.1"/>
    <property type="status" value="ALT_INIT"/>
    <property type="molecule type" value="Genomic_DNA"/>
</dbReference>
<dbReference type="PDB" id="2IZO">
    <property type="method" value="X-ray"/>
    <property type="resolution" value="2.90 A"/>
    <property type="chains" value="A=5-349"/>
</dbReference>
<dbReference type="PDBsum" id="2IZO"/>
<dbReference type="SMR" id="Q980U8"/>
<dbReference type="FunCoup" id="Q980U8">
    <property type="interactions" value="199"/>
</dbReference>
<dbReference type="STRING" id="273057.SSO0179"/>
<dbReference type="PaxDb" id="273057-SSO0179"/>
<dbReference type="EnsemblBacteria" id="AAK40525">
    <property type="protein sequence ID" value="AAK40525"/>
    <property type="gene ID" value="SSO0179"/>
</dbReference>
<dbReference type="KEGG" id="sso:SSO0179"/>
<dbReference type="PATRIC" id="fig|273057.12.peg.176"/>
<dbReference type="eggNOG" id="arCOG04050">
    <property type="taxonomic scope" value="Archaea"/>
</dbReference>
<dbReference type="HOGENOM" id="CLU_032444_0_0_2"/>
<dbReference type="InParanoid" id="Q980U8"/>
<dbReference type="PhylomeDB" id="Q980U8"/>
<dbReference type="BRENDA" id="3.1.99.B1">
    <property type="organism ID" value="6163"/>
</dbReference>
<dbReference type="EvolutionaryTrace" id="Q980U8"/>
<dbReference type="Proteomes" id="UP000001974">
    <property type="component" value="Chromosome"/>
</dbReference>
<dbReference type="GO" id="GO:0008409">
    <property type="term" value="F:5'-3' exonuclease activity"/>
    <property type="evidence" value="ECO:0007669"/>
    <property type="project" value="UniProtKB-UniRule"/>
</dbReference>
<dbReference type="GO" id="GO:0017108">
    <property type="term" value="F:5'-flap endonuclease activity"/>
    <property type="evidence" value="ECO:0000318"/>
    <property type="project" value="GO_Central"/>
</dbReference>
<dbReference type="GO" id="GO:0003677">
    <property type="term" value="F:DNA binding"/>
    <property type="evidence" value="ECO:0007669"/>
    <property type="project" value="UniProtKB-UniRule"/>
</dbReference>
<dbReference type="GO" id="GO:0000287">
    <property type="term" value="F:magnesium ion binding"/>
    <property type="evidence" value="ECO:0007669"/>
    <property type="project" value="UniProtKB-UniRule"/>
</dbReference>
<dbReference type="GO" id="GO:0006281">
    <property type="term" value="P:DNA repair"/>
    <property type="evidence" value="ECO:0007669"/>
    <property type="project" value="UniProtKB-UniRule"/>
</dbReference>
<dbReference type="GO" id="GO:0043137">
    <property type="term" value="P:DNA replication, removal of RNA primer"/>
    <property type="evidence" value="ECO:0007669"/>
    <property type="project" value="UniProtKB-UniRule"/>
</dbReference>
<dbReference type="CDD" id="cd09903">
    <property type="entry name" value="H3TH_FEN1-Arc"/>
    <property type="match status" value="1"/>
</dbReference>
<dbReference type="CDD" id="cd09867">
    <property type="entry name" value="PIN_FEN1"/>
    <property type="match status" value="1"/>
</dbReference>
<dbReference type="FunFam" id="1.10.150.20:FF:000087">
    <property type="entry name" value="Flap endonuclease 1"/>
    <property type="match status" value="1"/>
</dbReference>
<dbReference type="FunFam" id="3.40.50.1010:FF:000016">
    <property type="entry name" value="Flap endonuclease 1"/>
    <property type="match status" value="1"/>
</dbReference>
<dbReference type="Gene3D" id="1.10.150.20">
    <property type="entry name" value="5' to 3' exonuclease, C-terminal subdomain"/>
    <property type="match status" value="1"/>
</dbReference>
<dbReference type="Gene3D" id="3.40.50.1010">
    <property type="entry name" value="5'-nuclease"/>
    <property type="match status" value="1"/>
</dbReference>
<dbReference type="HAMAP" id="MF_00614">
    <property type="entry name" value="Fen"/>
    <property type="match status" value="1"/>
</dbReference>
<dbReference type="InterPro" id="IPR036279">
    <property type="entry name" value="5-3_exonuclease_C_sf"/>
</dbReference>
<dbReference type="InterPro" id="IPR023426">
    <property type="entry name" value="Flap_endonuc"/>
</dbReference>
<dbReference type="InterPro" id="IPR019973">
    <property type="entry name" value="Flap_endonuc_arc"/>
</dbReference>
<dbReference type="InterPro" id="IPR008918">
    <property type="entry name" value="HhH2"/>
</dbReference>
<dbReference type="InterPro" id="IPR029060">
    <property type="entry name" value="PIN-like_dom_sf"/>
</dbReference>
<dbReference type="InterPro" id="IPR006086">
    <property type="entry name" value="XPG-I_dom"/>
</dbReference>
<dbReference type="InterPro" id="IPR006084">
    <property type="entry name" value="XPG/Rad2"/>
</dbReference>
<dbReference type="InterPro" id="IPR019974">
    <property type="entry name" value="XPG_CS"/>
</dbReference>
<dbReference type="InterPro" id="IPR006085">
    <property type="entry name" value="XPG_DNA_repair_N"/>
</dbReference>
<dbReference type="NCBIfam" id="TIGR03674">
    <property type="entry name" value="fen_arch"/>
    <property type="match status" value="1"/>
</dbReference>
<dbReference type="PANTHER" id="PTHR11081:SF9">
    <property type="entry name" value="FLAP ENDONUCLEASE 1"/>
    <property type="match status" value="1"/>
</dbReference>
<dbReference type="PANTHER" id="PTHR11081">
    <property type="entry name" value="FLAP ENDONUCLEASE FAMILY MEMBER"/>
    <property type="match status" value="1"/>
</dbReference>
<dbReference type="Pfam" id="PF00867">
    <property type="entry name" value="XPG_I"/>
    <property type="match status" value="1"/>
</dbReference>
<dbReference type="Pfam" id="PF00752">
    <property type="entry name" value="XPG_N"/>
    <property type="match status" value="1"/>
</dbReference>
<dbReference type="PRINTS" id="PR00853">
    <property type="entry name" value="XPGRADSUPER"/>
</dbReference>
<dbReference type="SMART" id="SM00279">
    <property type="entry name" value="HhH2"/>
    <property type="match status" value="1"/>
</dbReference>
<dbReference type="SMART" id="SM00484">
    <property type="entry name" value="XPGI"/>
    <property type="match status" value="1"/>
</dbReference>
<dbReference type="SMART" id="SM00485">
    <property type="entry name" value="XPGN"/>
    <property type="match status" value="1"/>
</dbReference>
<dbReference type="SUPFAM" id="SSF47807">
    <property type="entry name" value="5' to 3' exonuclease, C-terminal subdomain"/>
    <property type="match status" value="1"/>
</dbReference>
<dbReference type="SUPFAM" id="SSF88723">
    <property type="entry name" value="PIN domain-like"/>
    <property type="match status" value="1"/>
</dbReference>
<dbReference type="PROSITE" id="PS00841">
    <property type="entry name" value="XPG_1"/>
    <property type="match status" value="1"/>
</dbReference>